<evidence type="ECO:0000255" key="1">
    <source>
        <dbReference type="PROSITE-ProRule" id="PRU00080"/>
    </source>
</evidence>
<name>FBL23_ARATH</name>
<reference key="1">
    <citation type="journal article" date="1999" name="Nature">
        <title>Sequence and analysis of chromosome 4 of the plant Arabidopsis thaliana.</title>
        <authorList>
            <person name="Mayer K.F.X."/>
            <person name="Schueller C."/>
            <person name="Wambutt R."/>
            <person name="Murphy G."/>
            <person name="Volckaert G."/>
            <person name="Pohl T."/>
            <person name="Duesterhoeft A."/>
            <person name="Stiekema W."/>
            <person name="Entian K.-D."/>
            <person name="Terryn N."/>
            <person name="Harris B."/>
            <person name="Ansorge W."/>
            <person name="Brandt P."/>
            <person name="Grivell L.A."/>
            <person name="Rieger M."/>
            <person name="Weichselgartner M."/>
            <person name="de Simone V."/>
            <person name="Obermaier B."/>
            <person name="Mache R."/>
            <person name="Mueller M."/>
            <person name="Kreis M."/>
            <person name="Delseny M."/>
            <person name="Puigdomenech P."/>
            <person name="Watson M."/>
            <person name="Schmidtheini T."/>
            <person name="Reichert B."/>
            <person name="Portetelle D."/>
            <person name="Perez-Alonso M."/>
            <person name="Boutry M."/>
            <person name="Bancroft I."/>
            <person name="Vos P."/>
            <person name="Hoheisel J."/>
            <person name="Zimmermann W."/>
            <person name="Wedler H."/>
            <person name="Ridley P."/>
            <person name="Langham S.-A."/>
            <person name="McCullagh B."/>
            <person name="Bilham L."/>
            <person name="Robben J."/>
            <person name="van der Schueren J."/>
            <person name="Grymonprez B."/>
            <person name="Chuang Y.-J."/>
            <person name="Vandenbussche F."/>
            <person name="Braeken M."/>
            <person name="Weltjens I."/>
            <person name="Voet M."/>
            <person name="Bastiaens I."/>
            <person name="Aert R."/>
            <person name="Defoor E."/>
            <person name="Weitzenegger T."/>
            <person name="Bothe G."/>
            <person name="Ramsperger U."/>
            <person name="Hilbert H."/>
            <person name="Braun M."/>
            <person name="Holzer E."/>
            <person name="Brandt A."/>
            <person name="Peters S."/>
            <person name="van Staveren M."/>
            <person name="Dirkse W."/>
            <person name="Mooijman P."/>
            <person name="Klein Lankhorst R."/>
            <person name="Rose M."/>
            <person name="Hauf J."/>
            <person name="Koetter P."/>
            <person name="Berneiser S."/>
            <person name="Hempel S."/>
            <person name="Feldpausch M."/>
            <person name="Lamberth S."/>
            <person name="Van den Daele H."/>
            <person name="De Keyser A."/>
            <person name="Buysshaert C."/>
            <person name="Gielen J."/>
            <person name="Villarroel R."/>
            <person name="De Clercq R."/>
            <person name="van Montagu M."/>
            <person name="Rogers J."/>
            <person name="Cronin A."/>
            <person name="Quail M.A."/>
            <person name="Bray-Allen S."/>
            <person name="Clark L."/>
            <person name="Doggett J."/>
            <person name="Hall S."/>
            <person name="Kay M."/>
            <person name="Lennard N."/>
            <person name="McLay K."/>
            <person name="Mayes R."/>
            <person name="Pettett A."/>
            <person name="Rajandream M.A."/>
            <person name="Lyne M."/>
            <person name="Benes V."/>
            <person name="Rechmann S."/>
            <person name="Borkova D."/>
            <person name="Bloecker H."/>
            <person name="Scharfe M."/>
            <person name="Grimm M."/>
            <person name="Loehnert T.-H."/>
            <person name="Dose S."/>
            <person name="de Haan M."/>
            <person name="Maarse A.C."/>
            <person name="Schaefer M."/>
            <person name="Mueller-Auer S."/>
            <person name="Gabel C."/>
            <person name="Fuchs M."/>
            <person name="Fartmann B."/>
            <person name="Granderath K."/>
            <person name="Dauner D."/>
            <person name="Herzl A."/>
            <person name="Neumann S."/>
            <person name="Argiriou A."/>
            <person name="Vitale D."/>
            <person name="Liguori R."/>
            <person name="Piravandi E."/>
            <person name="Massenet O."/>
            <person name="Quigley F."/>
            <person name="Clabauld G."/>
            <person name="Muendlein A."/>
            <person name="Felber R."/>
            <person name="Schnabl S."/>
            <person name="Hiller R."/>
            <person name="Schmidt W."/>
            <person name="Lecharny A."/>
            <person name="Aubourg S."/>
            <person name="Chefdor F."/>
            <person name="Cooke R."/>
            <person name="Berger C."/>
            <person name="Monfort A."/>
            <person name="Casacuberta E."/>
            <person name="Gibbons T."/>
            <person name="Weber N."/>
            <person name="Vandenbol M."/>
            <person name="Bargues M."/>
            <person name="Terol J."/>
            <person name="Torres A."/>
            <person name="Perez-Perez A."/>
            <person name="Purnelle B."/>
            <person name="Bent E."/>
            <person name="Johnson S."/>
            <person name="Tacon D."/>
            <person name="Jesse T."/>
            <person name="Heijnen L."/>
            <person name="Schwarz S."/>
            <person name="Scholler P."/>
            <person name="Heber S."/>
            <person name="Francs P."/>
            <person name="Bielke C."/>
            <person name="Frishman D."/>
            <person name="Haase D."/>
            <person name="Lemcke K."/>
            <person name="Mewes H.-W."/>
            <person name="Stocker S."/>
            <person name="Zaccaria P."/>
            <person name="Bevan M."/>
            <person name="Wilson R.K."/>
            <person name="de la Bastide M."/>
            <person name="Habermann K."/>
            <person name="Parnell L."/>
            <person name="Dedhia N."/>
            <person name="Gnoj L."/>
            <person name="Schutz K."/>
            <person name="Huang E."/>
            <person name="Spiegel L."/>
            <person name="Sekhon M."/>
            <person name="Murray J."/>
            <person name="Sheet P."/>
            <person name="Cordes M."/>
            <person name="Abu-Threideh J."/>
            <person name="Stoneking T."/>
            <person name="Kalicki J."/>
            <person name="Graves T."/>
            <person name="Harmon G."/>
            <person name="Edwards J."/>
            <person name="Latreille P."/>
            <person name="Courtney L."/>
            <person name="Cloud J."/>
            <person name="Abbott A."/>
            <person name="Scott K."/>
            <person name="Johnson D."/>
            <person name="Minx P."/>
            <person name="Bentley D."/>
            <person name="Fulton B."/>
            <person name="Miller N."/>
            <person name="Greco T."/>
            <person name="Kemp K."/>
            <person name="Kramer J."/>
            <person name="Fulton L."/>
            <person name="Mardis E."/>
            <person name="Dante M."/>
            <person name="Pepin K."/>
            <person name="Hillier L.W."/>
            <person name="Nelson J."/>
            <person name="Spieth J."/>
            <person name="Ryan E."/>
            <person name="Andrews S."/>
            <person name="Geisel C."/>
            <person name="Layman D."/>
            <person name="Du H."/>
            <person name="Ali J."/>
            <person name="Berghoff A."/>
            <person name="Jones K."/>
            <person name="Drone K."/>
            <person name="Cotton M."/>
            <person name="Joshu C."/>
            <person name="Antonoiu B."/>
            <person name="Zidanic M."/>
            <person name="Strong C."/>
            <person name="Sun H."/>
            <person name="Lamar B."/>
            <person name="Yordan C."/>
            <person name="Ma P."/>
            <person name="Zhong J."/>
            <person name="Preston R."/>
            <person name="Vil D."/>
            <person name="Shekher M."/>
            <person name="Matero A."/>
            <person name="Shah R."/>
            <person name="Swaby I.K."/>
            <person name="O'Shaughnessy A."/>
            <person name="Rodriguez M."/>
            <person name="Hoffman J."/>
            <person name="Till S."/>
            <person name="Granat S."/>
            <person name="Shohdy N."/>
            <person name="Hasegawa A."/>
            <person name="Hameed A."/>
            <person name="Lodhi M."/>
            <person name="Johnson A."/>
            <person name="Chen E."/>
            <person name="Marra M.A."/>
            <person name="Martienssen R."/>
            <person name="McCombie W.R."/>
        </authorList>
    </citation>
    <scope>NUCLEOTIDE SEQUENCE [LARGE SCALE GENOMIC DNA]</scope>
    <source>
        <strain>cv. Columbia</strain>
    </source>
</reference>
<reference key="2">
    <citation type="journal article" date="2017" name="Plant J.">
        <title>Araport11: a complete reannotation of the Arabidopsis thaliana reference genome.</title>
        <authorList>
            <person name="Cheng C.Y."/>
            <person name="Krishnakumar V."/>
            <person name="Chan A.P."/>
            <person name="Thibaud-Nissen F."/>
            <person name="Schobel S."/>
            <person name="Town C.D."/>
        </authorList>
    </citation>
    <scope>GENOME REANNOTATION</scope>
    <source>
        <strain>cv. Columbia</strain>
    </source>
</reference>
<reference key="3">
    <citation type="journal article" date="2000" name="Trends Plant Sci.">
        <title>F-box proteins in Arabidopsis.</title>
        <authorList>
            <person name="Xiao W."/>
            <person name="Jang J.-C."/>
        </authorList>
    </citation>
    <scope>GENE FAMILY</scope>
    <scope>NOMENCLATURE</scope>
</reference>
<feature type="chain" id="PRO_0000272262" description="Putative F-box/LRR-repeat protein 23">
    <location>
        <begin position="1"/>
        <end position="449"/>
    </location>
</feature>
<feature type="repeat" description="LRR 1">
    <location>
        <begin position="14"/>
        <end position="37"/>
    </location>
</feature>
<feature type="repeat" description="LRR 2">
    <location>
        <begin position="39"/>
        <end position="64"/>
    </location>
</feature>
<feature type="domain" description="F-box" evidence="1">
    <location>
        <begin position="178"/>
        <end position="225"/>
    </location>
</feature>
<feature type="repeat" description="LRR 3">
    <location>
        <begin position="261"/>
        <end position="286"/>
    </location>
</feature>
<feature type="repeat" description="LRR 4">
    <location>
        <begin position="287"/>
        <end position="311"/>
    </location>
</feature>
<feature type="repeat" description="LRR 5">
    <location>
        <begin position="312"/>
        <end position="337"/>
    </location>
</feature>
<feature type="repeat" description="LRR 6">
    <location>
        <begin position="344"/>
        <end position="367"/>
    </location>
</feature>
<feature type="repeat" description="LRR 7">
    <location>
        <begin position="369"/>
        <end position="394"/>
    </location>
</feature>
<feature type="repeat" description="LRR 8">
    <location>
        <begin position="401"/>
        <end position="427"/>
    </location>
</feature>
<proteinExistence type="predicted"/>
<accession>Q9S9V9</accession>
<dbReference type="EMBL" id="AF147263">
    <property type="protein sequence ID" value="AAD48965.1"/>
    <property type="molecule type" value="Genomic_DNA"/>
</dbReference>
<dbReference type="EMBL" id="AL161503">
    <property type="protein sequence ID" value="CAB81092.1"/>
    <property type="molecule type" value="Genomic_DNA"/>
</dbReference>
<dbReference type="EMBL" id="CP002687">
    <property type="status" value="NOT_ANNOTATED_CDS"/>
    <property type="molecule type" value="Genomic_DNA"/>
</dbReference>
<dbReference type="PIR" id="B85069">
    <property type="entry name" value="B85069"/>
</dbReference>
<dbReference type="SMR" id="Q9S9V9"/>
<dbReference type="FunCoup" id="Q9S9V9">
    <property type="interactions" value="610"/>
</dbReference>
<dbReference type="STRING" id="3702.Q9S9V9"/>
<dbReference type="Araport" id="AT4G05500"/>
<dbReference type="TAIR" id="AT4G05500"/>
<dbReference type="InParanoid" id="Q9S9V9"/>
<dbReference type="PRO" id="PR:Q9S9V9"/>
<dbReference type="Proteomes" id="UP000006548">
    <property type="component" value="Chromosome 4"/>
</dbReference>
<dbReference type="ExpressionAtlas" id="Q9S9V9">
    <property type="expression patterns" value="baseline and differential"/>
</dbReference>
<dbReference type="GO" id="GO:1905761">
    <property type="term" value="F:SCF ubiquitin ligase complex binding"/>
    <property type="evidence" value="ECO:0000318"/>
    <property type="project" value="GO_Central"/>
</dbReference>
<dbReference type="CDD" id="cd22164">
    <property type="entry name" value="F-box_AtSKIP19-like"/>
    <property type="match status" value="1"/>
</dbReference>
<dbReference type="Gene3D" id="1.20.1280.50">
    <property type="match status" value="1"/>
</dbReference>
<dbReference type="Gene3D" id="3.80.10.10">
    <property type="entry name" value="Ribonuclease Inhibitor"/>
    <property type="match status" value="2"/>
</dbReference>
<dbReference type="InterPro" id="IPR001810">
    <property type="entry name" value="F-box_dom"/>
</dbReference>
<dbReference type="InterPro" id="IPR006553">
    <property type="entry name" value="Leu-rich_rpt_Cys-con_subtyp"/>
</dbReference>
<dbReference type="InterPro" id="IPR032675">
    <property type="entry name" value="LRR_dom_sf"/>
</dbReference>
<dbReference type="PANTHER" id="PTHR38926">
    <property type="entry name" value="F-BOX DOMAIN CONTAINING PROTEIN, EXPRESSED"/>
    <property type="match status" value="1"/>
</dbReference>
<dbReference type="PANTHER" id="PTHR38926:SF2">
    <property type="entry name" value="F-BOX_LRR-REPEAT PROTEIN 21-RELATED"/>
    <property type="match status" value="1"/>
</dbReference>
<dbReference type="Pfam" id="PF12937">
    <property type="entry name" value="F-box-like"/>
    <property type="match status" value="1"/>
</dbReference>
<dbReference type="SMART" id="SM00367">
    <property type="entry name" value="LRR_CC"/>
    <property type="match status" value="5"/>
</dbReference>
<dbReference type="SUPFAM" id="SSF52047">
    <property type="entry name" value="RNI-like"/>
    <property type="match status" value="2"/>
</dbReference>
<dbReference type="PROSITE" id="PS50181">
    <property type="entry name" value="FBOX"/>
    <property type="match status" value="1"/>
</dbReference>
<sequence>MAPHRSRQRNPRFKLWRYDDEPLAIAETMPELRHLKLFGNGLTNLRLEAILDNCVHLVHLDLRRCFNINLLGDLEKRCSERIRDLRRPDDSTADSPFDASSDIYSAGEDDYDFYSDDSDGTLSDHFEECKTVSVATGNESVYVLSFVRSDNFIYPKKIASSSSLSSTPLPSLMKDKKLRNWAELPSKLTSSILLRLGAIEILQNAQKVCKPWHRVCKDPSMWRKIDIDNRNDRAAFKYDLESMCRHAVDRSHGGLIEIEIWYYGTNDLIMYIADRSSNLKSLGLVRCFPITDEGVAKAVSKVPLLEYLEVSYCLFSGESLRDIGRSCPNLKTLKLNRAPEIMFSNSGFDDNAKAIAESMPELRHLQLLGNGLTNKGLNAILDGCPHLEHLDLRQCFNINLVGDLKKRCFERIKDLRCPNDSDDDSDDGSDNGAVTTFGSQFNETDYHWY</sequence>
<organism>
    <name type="scientific">Arabidopsis thaliana</name>
    <name type="common">Mouse-ear cress</name>
    <dbReference type="NCBI Taxonomy" id="3702"/>
    <lineage>
        <taxon>Eukaryota</taxon>
        <taxon>Viridiplantae</taxon>
        <taxon>Streptophyta</taxon>
        <taxon>Embryophyta</taxon>
        <taxon>Tracheophyta</taxon>
        <taxon>Spermatophyta</taxon>
        <taxon>Magnoliopsida</taxon>
        <taxon>eudicotyledons</taxon>
        <taxon>Gunneridae</taxon>
        <taxon>Pentapetalae</taxon>
        <taxon>rosids</taxon>
        <taxon>malvids</taxon>
        <taxon>Brassicales</taxon>
        <taxon>Brassicaceae</taxon>
        <taxon>Camelineae</taxon>
        <taxon>Arabidopsis</taxon>
    </lineage>
</organism>
<protein>
    <recommendedName>
        <fullName>Putative F-box/LRR-repeat protein 23</fullName>
    </recommendedName>
</protein>
<keyword id="KW-0433">Leucine-rich repeat</keyword>
<keyword id="KW-1185">Reference proteome</keyword>
<keyword id="KW-0677">Repeat</keyword>
<gene>
    <name type="primary">FBL23</name>
    <name type="ordered locus">At4g05500</name>
    <name type="ORF">T1J24.2</name>
</gene>